<evidence type="ECO:0000250" key="1"/>
<evidence type="ECO:0000250" key="2">
    <source>
        <dbReference type="UniProtKB" id="P37941"/>
    </source>
</evidence>
<evidence type="ECO:0000250" key="3">
    <source>
        <dbReference type="UniProtKB" id="Q5SLR3"/>
    </source>
</evidence>
<evidence type="ECO:0000305" key="4"/>
<keyword id="KW-0560">Oxidoreductase</keyword>
<keyword id="KW-0786">Thiamine pyrophosphate</keyword>
<proteinExistence type="inferred from homology"/>
<gene>
    <name type="ordered locus">TT_C1756</name>
</gene>
<reference key="1">
    <citation type="journal article" date="2004" name="Nat. Biotechnol.">
        <title>The genome sequence of the extreme thermophile Thermus thermophilus.</title>
        <authorList>
            <person name="Henne A."/>
            <person name="Brueggemann H."/>
            <person name="Raasch C."/>
            <person name="Wiezer A."/>
            <person name="Hartsch T."/>
            <person name="Liesegang H."/>
            <person name="Johann A."/>
            <person name="Lienard T."/>
            <person name="Gohl O."/>
            <person name="Martinez-Arias R."/>
            <person name="Jacobi C."/>
            <person name="Starkuviene V."/>
            <person name="Schlenczeck S."/>
            <person name="Dencker S."/>
            <person name="Huber R."/>
            <person name="Klenk H.-P."/>
            <person name="Kramer W."/>
            <person name="Merkl R."/>
            <person name="Gottschalk G."/>
            <person name="Fritz H.-J."/>
        </authorList>
    </citation>
    <scope>NUCLEOTIDE SEQUENCE [LARGE SCALE GENOMIC DNA]</scope>
    <source>
        <strain>ATCC BAA-163 / DSM 7039 / HB27</strain>
    </source>
</reference>
<protein>
    <recommendedName>
        <fullName>2-oxoisovalerate dehydrogenase subunit beta</fullName>
        <ecNumber>1.2.4.4</ecNumber>
    </recommendedName>
    <alternativeName>
        <fullName>Branched-chain alpha-keto acid dehydrogenase E1 component beta chain</fullName>
        <shortName>BCKDH E1-beta</shortName>
    </alternativeName>
</protein>
<accession>Q72GU2</accession>
<comment type="function">
    <text evidence="2">The branched-chain alpha-keto dehydrogenase complex catalyzes the overall conversion of alpha-keto acids to acyl-CoA and CO(2). It contains multiple copies of three enzymatic components: branched-chain alpha-keto acid decarboxylase (E1), lipoamide acyltransferase (E2) and lipoamide dehydrogenase (E3) (By similarity).</text>
</comment>
<comment type="catalytic activity">
    <reaction evidence="3">
        <text>N(6)-[(R)-lipoyl]-L-lysyl-[protein] + 3-methyl-2-oxobutanoate + H(+) = N(6)-[(R)-S(8)-2-methylpropanoyldihydrolipoyl]-L-lysyl-[protein] + CO2</text>
        <dbReference type="Rhea" id="RHEA:13457"/>
        <dbReference type="Rhea" id="RHEA-COMP:10474"/>
        <dbReference type="Rhea" id="RHEA-COMP:10497"/>
        <dbReference type="ChEBI" id="CHEBI:11851"/>
        <dbReference type="ChEBI" id="CHEBI:15378"/>
        <dbReference type="ChEBI" id="CHEBI:16526"/>
        <dbReference type="ChEBI" id="CHEBI:83099"/>
        <dbReference type="ChEBI" id="CHEBI:83142"/>
        <dbReference type="EC" id="1.2.4.4"/>
    </reaction>
</comment>
<comment type="cofactor">
    <cofactor evidence="3">
        <name>thiamine diphosphate</name>
        <dbReference type="ChEBI" id="CHEBI:58937"/>
    </cofactor>
</comment>
<comment type="subunit">
    <text evidence="3">Heterotetramer of two alpha and two beta chains. Directly associated with ODBA in the E1 complex (By similarity).</text>
</comment>
<dbReference type="EC" id="1.2.4.4"/>
<dbReference type="EMBL" id="AE017221">
    <property type="protein sequence ID" value="AAS82098.1"/>
    <property type="molecule type" value="Genomic_DNA"/>
</dbReference>
<dbReference type="RefSeq" id="WP_011174114.1">
    <property type="nucleotide sequence ID" value="NC_005835.1"/>
</dbReference>
<dbReference type="SMR" id="Q72GU2"/>
<dbReference type="KEGG" id="tth:TT_C1756"/>
<dbReference type="eggNOG" id="COG0022">
    <property type="taxonomic scope" value="Bacteria"/>
</dbReference>
<dbReference type="HOGENOM" id="CLU_012907_1_0_0"/>
<dbReference type="OrthoDB" id="8732661at2"/>
<dbReference type="Proteomes" id="UP000000592">
    <property type="component" value="Chromosome"/>
</dbReference>
<dbReference type="GO" id="GO:0003863">
    <property type="term" value="F:3-methyl-2-oxobutanoate dehydrogenase (2-methylpropanoyl-transferring) activity"/>
    <property type="evidence" value="ECO:0007669"/>
    <property type="project" value="UniProtKB-EC"/>
</dbReference>
<dbReference type="CDD" id="cd07036">
    <property type="entry name" value="TPP_PYR_E1-PDHc-beta_like"/>
    <property type="match status" value="1"/>
</dbReference>
<dbReference type="FunFam" id="3.40.50.920:FF:000001">
    <property type="entry name" value="Pyruvate dehydrogenase E1 beta subunit"/>
    <property type="match status" value="1"/>
</dbReference>
<dbReference type="FunFam" id="3.40.50.970:FF:000001">
    <property type="entry name" value="Pyruvate dehydrogenase E1 beta subunit"/>
    <property type="match status" value="1"/>
</dbReference>
<dbReference type="Gene3D" id="3.40.50.920">
    <property type="match status" value="1"/>
</dbReference>
<dbReference type="Gene3D" id="3.40.50.970">
    <property type="match status" value="1"/>
</dbReference>
<dbReference type="InterPro" id="IPR029061">
    <property type="entry name" value="THDP-binding"/>
</dbReference>
<dbReference type="InterPro" id="IPR009014">
    <property type="entry name" value="Transketo_C/PFOR_II"/>
</dbReference>
<dbReference type="InterPro" id="IPR005475">
    <property type="entry name" value="Transketolase-like_Pyr-bd"/>
</dbReference>
<dbReference type="InterPro" id="IPR033248">
    <property type="entry name" value="Transketolase_C"/>
</dbReference>
<dbReference type="PANTHER" id="PTHR43257">
    <property type="entry name" value="PYRUVATE DEHYDROGENASE E1 COMPONENT BETA SUBUNIT"/>
    <property type="match status" value="1"/>
</dbReference>
<dbReference type="PANTHER" id="PTHR43257:SF2">
    <property type="entry name" value="PYRUVATE DEHYDROGENASE E1 COMPONENT SUBUNIT BETA"/>
    <property type="match status" value="1"/>
</dbReference>
<dbReference type="Pfam" id="PF02779">
    <property type="entry name" value="Transket_pyr"/>
    <property type="match status" value="1"/>
</dbReference>
<dbReference type="Pfam" id="PF02780">
    <property type="entry name" value="Transketolase_C"/>
    <property type="match status" value="1"/>
</dbReference>
<dbReference type="SMART" id="SM00861">
    <property type="entry name" value="Transket_pyr"/>
    <property type="match status" value="1"/>
</dbReference>
<dbReference type="SUPFAM" id="SSF52518">
    <property type="entry name" value="Thiamin diphosphate-binding fold (THDP-binding)"/>
    <property type="match status" value="1"/>
</dbReference>
<dbReference type="SUPFAM" id="SSF52922">
    <property type="entry name" value="TK C-terminal domain-like"/>
    <property type="match status" value="1"/>
</dbReference>
<name>ODBB_THET2</name>
<sequence>MALMTMVQALNRALDEEMAKDPRVVVLGEDVGKRGGVFLVTEGLLQKYGPDRVMDTPLSEAAIVGAALGMAAHGLRPVAEIQFADYIFPGFDQLVSQVAKLRYRSGGQFTAPLVVRMPSGGGVRGGHHHSQSPEAHFVHTAGLKVVAVSTPYDAKGLLKAAIRDEDPVVFLEPKRLYRSVKEEVPEEDYTLSIGKAALRREGKDLTLIGYGTVMPEVLQAAAELAKAGVSAEVLDLRTLMPWDYEAVMNSVAKTGRVVLVSDAPRHASFVSEVAATIAEDLLDMLLAPPIRVTGFDTPYPYAQDKLYLPTVTRILNAAKRALDY</sequence>
<organism>
    <name type="scientific">Thermus thermophilus (strain ATCC BAA-163 / DSM 7039 / HB27)</name>
    <dbReference type="NCBI Taxonomy" id="262724"/>
    <lineage>
        <taxon>Bacteria</taxon>
        <taxon>Thermotogati</taxon>
        <taxon>Deinococcota</taxon>
        <taxon>Deinococci</taxon>
        <taxon>Thermales</taxon>
        <taxon>Thermaceae</taxon>
        <taxon>Thermus</taxon>
    </lineage>
</organism>
<feature type="chain" id="PRO_0000294976" description="2-oxoisovalerate dehydrogenase subunit beta">
    <location>
        <begin position="1"/>
        <end position="324"/>
    </location>
</feature>
<feature type="active site" description="Proton acceptor" evidence="3 4">
    <location>
        <position position="129"/>
    </location>
</feature>
<feature type="binding site" evidence="3">
    <location>
        <position position="29"/>
    </location>
    <ligand>
        <name>thiamine diphosphate</name>
        <dbReference type="ChEBI" id="CHEBI:58937"/>
    </ligand>
</feature>
<feature type="binding site" evidence="1">
    <location>
        <begin position="58"/>
        <end position="60"/>
    </location>
    <ligand>
        <name>thiamine diphosphate</name>
        <dbReference type="ChEBI" id="CHEBI:58937"/>
    </ligand>
</feature>
<feature type="binding site" evidence="3">
    <location>
        <position position="82"/>
    </location>
    <ligand>
        <name>thiamine diphosphate</name>
        <dbReference type="ChEBI" id="CHEBI:58937"/>
    </ligand>
</feature>
<feature type="binding site" evidence="1">
    <location>
        <begin position="83"/>
        <end position="86"/>
    </location>
    <ligand>
        <name>substrate</name>
    </ligand>
</feature>
<feature type="binding site" evidence="1">
    <location>
        <begin position="86"/>
        <end position="89"/>
    </location>
    <ligand>
        <name>thiamine diphosphate</name>
        <dbReference type="ChEBI" id="CHEBI:58937"/>
    </ligand>
</feature>
<feature type="binding site" evidence="3">
    <location>
        <position position="129"/>
    </location>
    <ligand>
        <name>substrate</name>
    </ligand>
</feature>